<reference key="1">
    <citation type="journal article" date="2016" name="Stand. Genomic Sci.">
        <title>Complete genome sequence of Methanospirillum hungatei type strain JF1.</title>
        <authorList>
            <person name="Gunsalus R.P."/>
            <person name="Cook L.E."/>
            <person name="Crable B."/>
            <person name="Rohlin L."/>
            <person name="McDonald E."/>
            <person name="Mouttaki H."/>
            <person name="Sieber J.R."/>
            <person name="Poweleit N."/>
            <person name="Zhou H."/>
            <person name="Lapidus A.L."/>
            <person name="Daligault H.E."/>
            <person name="Land M."/>
            <person name="Gilna P."/>
            <person name="Ivanova N."/>
            <person name="Kyrpides N."/>
            <person name="Culley D.E."/>
            <person name="McInerney M.J."/>
        </authorList>
    </citation>
    <scope>NUCLEOTIDE SEQUENCE [LARGE SCALE GENOMIC DNA]</scope>
    <source>
        <strain>ATCC 27890 / DSM 864 / NBRC 100397 / JF-1</strain>
    </source>
</reference>
<keyword id="KW-1185">Reference proteome</keyword>
<keyword id="KW-0687">Ribonucleoprotein</keyword>
<keyword id="KW-0689">Ribosomal protein</keyword>
<gene>
    <name evidence="1" type="primary">rpl21e</name>
    <name type="ordered locus">Mhun_3026</name>
</gene>
<protein>
    <recommendedName>
        <fullName evidence="1">Large ribosomal subunit protein eL21</fullName>
    </recommendedName>
    <alternativeName>
        <fullName evidence="2">50S ribosomal protein L21e</fullName>
    </alternativeName>
</protein>
<proteinExistence type="inferred from homology"/>
<comment type="similarity">
    <text evidence="1">Belongs to the eukaryotic ribosomal protein eL21 family.</text>
</comment>
<name>RL21_METHJ</name>
<dbReference type="EMBL" id="CP000254">
    <property type="protein sequence ID" value="ABD42713.1"/>
    <property type="molecule type" value="Genomic_DNA"/>
</dbReference>
<dbReference type="RefSeq" id="WP_011449964.1">
    <property type="nucleotide sequence ID" value="NC_007796.1"/>
</dbReference>
<dbReference type="SMR" id="Q2FS99"/>
<dbReference type="FunCoup" id="Q2FS99">
    <property type="interactions" value="123"/>
</dbReference>
<dbReference type="STRING" id="323259.Mhun_3026"/>
<dbReference type="EnsemblBacteria" id="ABD42713">
    <property type="protein sequence ID" value="ABD42713"/>
    <property type="gene ID" value="Mhun_3026"/>
</dbReference>
<dbReference type="GeneID" id="3922927"/>
<dbReference type="KEGG" id="mhu:Mhun_3026"/>
<dbReference type="eggNOG" id="arCOG04129">
    <property type="taxonomic scope" value="Archaea"/>
</dbReference>
<dbReference type="HOGENOM" id="CLU_103610_1_1_2"/>
<dbReference type="InParanoid" id="Q2FS99"/>
<dbReference type="OrthoDB" id="6295at2157"/>
<dbReference type="Proteomes" id="UP000001941">
    <property type="component" value="Chromosome"/>
</dbReference>
<dbReference type="GO" id="GO:1990904">
    <property type="term" value="C:ribonucleoprotein complex"/>
    <property type="evidence" value="ECO:0007669"/>
    <property type="project" value="UniProtKB-KW"/>
</dbReference>
<dbReference type="GO" id="GO:0005840">
    <property type="term" value="C:ribosome"/>
    <property type="evidence" value="ECO:0007669"/>
    <property type="project" value="UniProtKB-KW"/>
</dbReference>
<dbReference type="GO" id="GO:0003735">
    <property type="term" value="F:structural constituent of ribosome"/>
    <property type="evidence" value="ECO:0007669"/>
    <property type="project" value="InterPro"/>
</dbReference>
<dbReference type="GO" id="GO:0006412">
    <property type="term" value="P:translation"/>
    <property type="evidence" value="ECO:0007669"/>
    <property type="project" value="UniProtKB-UniRule"/>
</dbReference>
<dbReference type="FunFam" id="2.30.30.70:FF:000001">
    <property type="entry name" value="60S ribosomal protein L21"/>
    <property type="match status" value="1"/>
</dbReference>
<dbReference type="Gene3D" id="2.30.30.70">
    <property type="entry name" value="Ribosomal protein L21"/>
    <property type="match status" value="1"/>
</dbReference>
<dbReference type="HAMAP" id="MF_00369">
    <property type="entry name" value="Ribosomal_eL21"/>
    <property type="match status" value="1"/>
</dbReference>
<dbReference type="InterPro" id="IPR001147">
    <property type="entry name" value="Ribosomal_eL21"/>
</dbReference>
<dbReference type="InterPro" id="IPR022856">
    <property type="entry name" value="Ribosomal_eL21_arc"/>
</dbReference>
<dbReference type="InterPro" id="IPR018259">
    <property type="entry name" value="Ribosomal_eL21_CS"/>
</dbReference>
<dbReference type="InterPro" id="IPR036948">
    <property type="entry name" value="Ribosomal_eL21_sf"/>
</dbReference>
<dbReference type="InterPro" id="IPR008991">
    <property type="entry name" value="Translation_prot_SH3-like_sf"/>
</dbReference>
<dbReference type="NCBIfam" id="NF003303">
    <property type="entry name" value="PRK04306.1"/>
    <property type="match status" value="1"/>
</dbReference>
<dbReference type="PANTHER" id="PTHR20981">
    <property type="entry name" value="60S RIBOSOMAL PROTEIN L21"/>
    <property type="match status" value="1"/>
</dbReference>
<dbReference type="Pfam" id="PF01157">
    <property type="entry name" value="Ribosomal_L21e"/>
    <property type="match status" value="1"/>
</dbReference>
<dbReference type="SUPFAM" id="SSF50104">
    <property type="entry name" value="Translation proteins SH3-like domain"/>
    <property type="match status" value="1"/>
</dbReference>
<dbReference type="PROSITE" id="PS01171">
    <property type="entry name" value="RIBOSOMAL_L21E"/>
    <property type="match status" value="1"/>
</dbReference>
<organism>
    <name type="scientific">Methanospirillum hungatei JF-1 (strain ATCC 27890 / DSM 864 / NBRC 100397 / JF-1)</name>
    <dbReference type="NCBI Taxonomy" id="323259"/>
    <lineage>
        <taxon>Archaea</taxon>
        <taxon>Methanobacteriati</taxon>
        <taxon>Methanobacteriota</taxon>
        <taxon>Stenosarchaea group</taxon>
        <taxon>Methanomicrobia</taxon>
        <taxon>Methanomicrobiales</taxon>
        <taxon>Methanospirillaceae</taxon>
        <taxon>Methanospirillum</taxon>
    </lineage>
</organism>
<feature type="chain" id="PRO_0000243372" description="Large ribosomal subunit protein eL21">
    <location>
        <begin position="1"/>
        <end position="97"/>
    </location>
</feature>
<sequence>MALHNGPRKKTRYKFKKDLRSRGVLPVTRVIQQFELGQKVHIVCEPSIQKGMPHRRFHGKTGSVVGQRGRAWLVEIRDGNKFKTVISRPQHLRAQQF</sequence>
<evidence type="ECO:0000255" key="1">
    <source>
        <dbReference type="HAMAP-Rule" id="MF_00369"/>
    </source>
</evidence>
<evidence type="ECO:0000305" key="2"/>
<accession>Q2FS99</accession>